<proteinExistence type="evidence at protein level"/>
<organism>
    <name type="scientific">Homo sapiens</name>
    <name type="common">Human</name>
    <dbReference type="NCBI Taxonomy" id="9606"/>
    <lineage>
        <taxon>Eukaryota</taxon>
        <taxon>Metazoa</taxon>
        <taxon>Chordata</taxon>
        <taxon>Craniata</taxon>
        <taxon>Vertebrata</taxon>
        <taxon>Euteleostomi</taxon>
        <taxon>Mammalia</taxon>
        <taxon>Eutheria</taxon>
        <taxon>Euarchontoglires</taxon>
        <taxon>Primates</taxon>
        <taxon>Haplorrhini</taxon>
        <taxon>Catarrhini</taxon>
        <taxon>Hominidae</taxon>
        <taxon>Homo</taxon>
    </lineage>
</organism>
<feature type="chain" id="PRO_0000198838" description="High affinity cAMP-specific and IBMX-insensitive 3',5'-cyclic phosphodiesterase 8A">
    <location>
        <begin position="1"/>
        <end position="829"/>
    </location>
</feature>
<feature type="domain" description="PAS" evidence="4">
    <location>
        <begin position="213"/>
        <end position="283"/>
    </location>
</feature>
<feature type="domain" description="PAC">
    <location>
        <begin position="287"/>
        <end position="329"/>
    </location>
</feature>
<feature type="domain" description="PDEase" evidence="5">
    <location>
        <begin position="480"/>
        <end position="820"/>
    </location>
</feature>
<feature type="region of interest" description="Disordered" evidence="6">
    <location>
        <begin position="16"/>
        <end position="46"/>
    </location>
</feature>
<feature type="region of interest" description="Disordered" evidence="6">
    <location>
        <begin position="341"/>
        <end position="360"/>
    </location>
</feature>
<feature type="region of interest" description="Involved in RAF1-binding" evidence="11">
    <location>
        <begin position="454"/>
        <end position="461"/>
    </location>
</feature>
<feature type="active site" description="Proton donor" evidence="1">
    <location>
        <position position="556"/>
    </location>
</feature>
<feature type="binding site" evidence="9 16 17">
    <location>
        <position position="560"/>
    </location>
    <ligand>
        <name>a divalent metal cation</name>
        <dbReference type="ChEBI" id="CHEBI:60240"/>
        <label>1</label>
    </ligand>
</feature>
<feature type="binding site" evidence="9 16 17">
    <location>
        <position position="596"/>
    </location>
    <ligand>
        <name>a divalent metal cation</name>
        <dbReference type="ChEBI" id="CHEBI:60240"/>
        <label>1</label>
    </ligand>
</feature>
<feature type="binding site" evidence="9 16 17">
    <location>
        <position position="597"/>
    </location>
    <ligand>
        <name>a divalent metal cation</name>
        <dbReference type="ChEBI" id="CHEBI:60240"/>
        <label>1</label>
    </ligand>
</feature>
<feature type="binding site" evidence="9 16 17">
    <location>
        <position position="597"/>
    </location>
    <ligand>
        <name>a divalent metal cation</name>
        <dbReference type="ChEBI" id="CHEBI:60240"/>
        <label>2</label>
    </ligand>
</feature>
<feature type="binding site" evidence="9 16 17">
    <location>
        <position position="726"/>
    </location>
    <ligand>
        <name>a divalent metal cation</name>
        <dbReference type="ChEBI" id="CHEBI:60240"/>
        <label>1</label>
    </ligand>
</feature>
<feature type="modified residue" description="Phosphoserine" evidence="19 21">
    <location>
        <position position="20"/>
    </location>
</feature>
<feature type="modified residue" description="Phosphoserine; by PKA" evidence="10">
    <location>
        <position position="359"/>
    </location>
</feature>
<feature type="modified residue" description="Phosphoserine" evidence="2">
    <location>
        <position position="386"/>
    </location>
</feature>
<feature type="modified residue" description="Phosphoserine" evidence="18 19 20 21">
    <location>
        <position position="457"/>
    </location>
</feature>
<feature type="modified residue" description="Phosphotyrosine" evidence="2">
    <location>
        <position position="461"/>
    </location>
</feature>
<feature type="splice variant" id="VSP_046017" description="In isoform 6." evidence="13">
    <location>
        <begin position="1"/>
        <end position="72"/>
    </location>
</feature>
<feature type="splice variant" id="VSP_041674" description="In isoform 4." evidence="12">
    <original>RACNSVFTALENSEDAI</original>
    <variation>SMQILHLKQQWAISQVN</variation>
    <location>
        <begin position="212"/>
        <end position="228"/>
    </location>
</feature>
<feature type="splice variant" id="VSP_041675" description="In isoform 3." evidence="12">
    <original>ACNSVFTALENSEDAIEIT</original>
    <variation>SGKEFTMQKRKTEIIYNKM</variation>
    <location>
        <begin position="213"/>
        <end position="231"/>
    </location>
</feature>
<feature type="splice variant" id="VSP_041676" description="In isoform 4." evidence="12">
    <location>
        <begin position="229"/>
        <end position="829"/>
    </location>
</feature>
<feature type="splice variant" id="VSP_041677" description="In isoform 3." evidence="12">
    <location>
        <begin position="232"/>
        <end position="829"/>
    </location>
</feature>
<feature type="splice variant" id="VSP_004597" description="In isoform 2." evidence="12 14">
    <location>
        <begin position="239"/>
        <end position="284"/>
    </location>
</feature>
<feature type="splice variant" id="VSP_041678" description="In isoform 5." evidence="12">
    <original>YANPAFETTMGYQSGELIGKELGEVPINEKKADL</original>
    <variation>PCCSSSWFGAAHIPSSAPVEVGVGLLPSWSLRRT</variation>
    <location>
        <begin position="239"/>
        <end position="272"/>
    </location>
</feature>
<feature type="splice variant" id="VSP_041679" description="In isoform 5." evidence="12">
    <location>
        <begin position="273"/>
        <end position="829"/>
    </location>
</feature>
<feature type="sequence variant" id="VAR_069109" description="In dbSNP:rs17855018." evidence="7 8">
    <original>E</original>
    <variation>G</variation>
    <location>
        <position position="112"/>
    </location>
</feature>
<feature type="mutagenesis site" description="Reduces interaction with RAF1; when associated with A-460 and A-461." evidence="11">
    <original>RR</original>
    <variation>AA</variation>
    <location>
        <begin position="454"/>
        <end position="455"/>
    </location>
</feature>
<feature type="mutagenesis site" description="Reduces interaction with RAF1; when associated with A-454 and A-455." evidence="11">
    <original>EY</original>
    <variation>AA</variation>
    <location>
        <begin position="460"/>
        <end position="461"/>
    </location>
</feature>
<feature type="mutagenesis site" description="Increases sensitivity to several nonselective or family selective PDE inhibitors." evidence="9">
    <original>Y</original>
    <variation>F</variation>
    <location>
        <position position="748"/>
    </location>
</feature>
<feature type="sequence conflict" description="In Ref. 2; AAK57641." evidence="15" ref="2">
    <original>L</original>
    <variation>V</variation>
    <location>
        <position position="55"/>
    </location>
</feature>
<feature type="sequence conflict" description="In Ref. 2; AAK57641 and 7; AAC39763." evidence="15" ref="2 7">
    <original>H</original>
    <variation>R</variation>
    <location>
        <position position="344"/>
    </location>
</feature>
<feature type="sequence conflict" description="In Ref. 2; AAK57641 and 7; AAC39763." evidence="15" ref="2 7">
    <original>I</original>
    <variation>V</variation>
    <location>
        <position position="399"/>
    </location>
</feature>
<feature type="helix" evidence="22">
    <location>
        <begin position="486"/>
        <end position="491"/>
    </location>
</feature>
<feature type="turn" evidence="22">
    <location>
        <begin position="492"/>
        <end position="496"/>
    </location>
</feature>
<feature type="strand" evidence="22">
    <location>
        <begin position="497"/>
        <end position="499"/>
    </location>
</feature>
<feature type="helix" evidence="22">
    <location>
        <begin position="502"/>
        <end position="508"/>
    </location>
</feature>
<feature type="helix" evidence="22">
    <location>
        <begin position="513"/>
        <end position="524"/>
    </location>
</feature>
<feature type="helix" evidence="22">
    <location>
        <begin position="528"/>
        <end position="531"/>
    </location>
</feature>
<feature type="helix" evidence="22">
    <location>
        <begin position="535"/>
        <end position="547"/>
    </location>
</feature>
<feature type="strand" evidence="22">
    <location>
        <begin position="553"/>
        <end position="557"/>
    </location>
</feature>
<feature type="helix" evidence="22">
    <location>
        <begin position="558"/>
        <end position="572"/>
    </location>
</feature>
<feature type="helix" evidence="22">
    <location>
        <begin position="575"/>
        <end position="578"/>
    </location>
</feature>
<feature type="helix" evidence="22">
    <location>
        <begin position="583"/>
        <end position="595"/>
    </location>
</feature>
<feature type="turn" evidence="22">
    <location>
        <begin position="596"/>
        <end position="599"/>
    </location>
</feature>
<feature type="helix" evidence="22">
    <location>
        <begin position="605"/>
        <end position="610"/>
    </location>
</feature>
<feature type="helix" evidence="22">
    <location>
        <begin position="614"/>
        <end position="618"/>
    </location>
</feature>
<feature type="turn" evidence="22">
    <location>
        <begin position="619"/>
        <end position="621"/>
    </location>
</feature>
<feature type="helix" evidence="22">
    <location>
        <begin position="624"/>
        <end position="638"/>
    </location>
</feature>
<feature type="turn" evidence="22">
    <location>
        <begin position="641"/>
        <end position="643"/>
    </location>
</feature>
<feature type="turn" evidence="22">
    <location>
        <begin position="645"/>
        <end position="648"/>
    </location>
</feature>
<feature type="helix" evidence="22">
    <location>
        <begin position="651"/>
        <end position="666"/>
    </location>
</feature>
<feature type="helix" evidence="22">
    <location>
        <begin position="670"/>
        <end position="672"/>
    </location>
</feature>
<feature type="helix" evidence="22">
    <location>
        <begin position="673"/>
        <end position="683"/>
    </location>
</feature>
<feature type="helix" evidence="22">
    <location>
        <begin position="685"/>
        <end position="691"/>
    </location>
</feature>
<feature type="helix" evidence="23">
    <location>
        <begin position="692"/>
        <end position="694"/>
    </location>
</feature>
<feature type="helix" evidence="22">
    <location>
        <begin position="698"/>
        <end position="708"/>
    </location>
</feature>
<feature type="helix" evidence="22">
    <location>
        <begin position="711"/>
        <end position="726"/>
    </location>
</feature>
<feature type="helix" evidence="22">
    <location>
        <begin position="729"/>
        <end position="731"/>
    </location>
</feature>
<feature type="helix" evidence="22">
    <location>
        <begin position="734"/>
        <end position="758"/>
    </location>
</feature>
<feature type="turn" evidence="22">
    <location>
        <begin position="769"/>
        <end position="771"/>
    </location>
</feature>
<feature type="helix" evidence="22">
    <location>
        <begin position="774"/>
        <end position="784"/>
    </location>
</feature>
<feature type="helix" evidence="22">
    <location>
        <begin position="786"/>
        <end position="797"/>
    </location>
</feature>
<feature type="helix" evidence="22">
    <location>
        <begin position="800"/>
        <end position="814"/>
    </location>
</feature>
<accession>O60658</accession>
<accession>B3KXE6</accession>
<accession>H0YMZ7</accession>
<accession>Q6P9H3</accession>
<accession>Q969I1</accession>
<accession>Q96PC9</accession>
<accession>Q96PD0</accession>
<accession>Q96PD1</accession>
<accession>Q96T71</accession>
<accession>Q9UMB7</accession>
<accession>Q9UMC3</accession>
<sequence>MGCAPSIHISERLVAEDAPSPAAPPLSSGGPRLPQGQKTAALPRTRGAGLLESELRDGSGKKVAVADVQFGPMRFHQDQLQVLLVFTKEDNQCNGFCRACEKAGFKCTVTKEAQAVLACFLDKHHDIIIIDHRNPRQLDAEALCRSIRSSKLSENTVIVGVVRRVDREELSVMPFISAGFTRRYVENPNIMACYNELLQLEFGEVRSQLKLRACNSVFTALENSEDAIEITSEDRFIQYANPAFETTMGYQSGELIGKELGEVPINEKKADLLDTINSCIRIGKEWQGIYYAKKKNGDNIQQNVKIIPVIGQGGKIRHYVSIIRVCNGNNKAEKISECVQSDTHTDNQTGKHKDRRKGSLDVKAVASRATEVSSQRRHSSMARIHSMTIEAPITKVINIINAAQESSPMPVTEALDRVLEILRTTELYSPQFGAKDDDPHANDLVGGLMSDGLRRLSGNEYVLSTKNTQMVSSNIITPISLDDVPPRIARAMENEEYWDFDIFELEAATHNRPLIYLGLKMFARFGICEFLHCSESTLRSWLQIIEANYHSSNPYHNSTHSADVLHATAYFLSKERIKETLDPIDEVAALIAATIHDVDHPGRTNSFLCNAGSELAILYNDTAVLESHHAALAFQLTTGDDKCNIFKNMERNDYRTLRQGIIDMVLATEMTKHFEHVNKFVNSINKPLATLEENGETDKNQEVINTMLRTPENRTLIKRMLIKCADVSNPCRPLQYCIEWAARISEEYFSQTDEEKQQGLPVVMPVFDRNTCSIPKSQISFIDYFITDMFDAWDAFVDLPDLMQHLDNNFKYWKGLDEMKLRNLRPPPE</sequence>
<reference key="1">
    <citation type="journal article" date="2001" name="Gene">
        <title>Human phosphodiesterase 8A splice variants: cloning, gene organization, and tissue distribution.</title>
        <authorList>
            <person name="Wang P."/>
            <person name="Wu P."/>
            <person name="Egan R.W."/>
            <person name="Billah M.M."/>
        </authorList>
    </citation>
    <scope>NUCLEOTIDE SEQUENCE [MRNA] (ISOFORMS 1; 2; 3; 4 AND 5)</scope>
    <source>
        <tissue>Testis</tissue>
    </source>
</reference>
<reference key="2">
    <citation type="journal article" date="2001" name="Proc. Natl. Acad. Sci. U.S.A.">
        <title>T cell activation up-regulates cyclic nucleotide phosphodiesterases 8A1 and 7A3.</title>
        <authorList>
            <person name="Glavas N.A."/>
            <person name="Ostenson C."/>
            <person name="Schaefer J.B."/>
            <person name="Vasta V."/>
            <person name="Beavo J.A."/>
        </authorList>
    </citation>
    <scope>NUCLEOTIDE SEQUENCE [MRNA] (ISOFORM 1)</scope>
</reference>
<reference key="3">
    <citation type="journal article" date="2004" name="Nat. Genet.">
        <title>Complete sequencing and characterization of 21,243 full-length human cDNAs.</title>
        <authorList>
            <person name="Ota T."/>
            <person name="Suzuki Y."/>
            <person name="Nishikawa T."/>
            <person name="Otsuki T."/>
            <person name="Sugiyama T."/>
            <person name="Irie R."/>
            <person name="Wakamatsu A."/>
            <person name="Hayashi K."/>
            <person name="Sato H."/>
            <person name="Nagai K."/>
            <person name="Kimura K."/>
            <person name="Makita H."/>
            <person name="Sekine M."/>
            <person name="Obayashi M."/>
            <person name="Nishi T."/>
            <person name="Shibahara T."/>
            <person name="Tanaka T."/>
            <person name="Ishii S."/>
            <person name="Yamamoto J."/>
            <person name="Saito K."/>
            <person name="Kawai Y."/>
            <person name="Isono Y."/>
            <person name="Nakamura Y."/>
            <person name="Nagahari K."/>
            <person name="Murakami K."/>
            <person name="Yasuda T."/>
            <person name="Iwayanagi T."/>
            <person name="Wagatsuma M."/>
            <person name="Shiratori A."/>
            <person name="Sudo H."/>
            <person name="Hosoiri T."/>
            <person name="Kaku Y."/>
            <person name="Kodaira H."/>
            <person name="Kondo H."/>
            <person name="Sugawara M."/>
            <person name="Takahashi M."/>
            <person name="Kanda K."/>
            <person name="Yokoi T."/>
            <person name="Furuya T."/>
            <person name="Kikkawa E."/>
            <person name="Omura Y."/>
            <person name="Abe K."/>
            <person name="Kamihara K."/>
            <person name="Katsuta N."/>
            <person name="Sato K."/>
            <person name="Tanikawa M."/>
            <person name="Yamazaki M."/>
            <person name="Ninomiya K."/>
            <person name="Ishibashi T."/>
            <person name="Yamashita H."/>
            <person name="Murakawa K."/>
            <person name="Fujimori K."/>
            <person name="Tanai H."/>
            <person name="Kimata M."/>
            <person name="Watanabe M."/>
            <person name="Hiraoka S."/>
            <person name="Chiba Y."/>
            <person name="Ishida S."/>
            <person name="Ono Y."/>
            <person name="Takiguchi S."/>
            <person name="Watanabe S."/>
            <person name="Yosida M."/>
            <person name="Hotuta T."/>
            <person name="Kusano J."/>
            <person name="Kanehori K."/>
            <person name="Takahashi-Fujii A."/>
            <person name="Hara H."/>
            <person name="Tanase T.-O."/>
            <person name="Nomura Y."/>
            <person name="Togiya S."/>
            <person name="Komai F."/>
            <person name="Hara R."/>
            <person name="Takeuchi K."/>
            <person name="Arita M."/>
            <person name="Imose N."/>
            <person name="Musashino K."/>
            <person name="Yuuki H."/>
            <person name="Oshima A."/>
            <person name="Sasaki N."/>
            <person name="Aotsuka S."/>
            <person name="Yoshikawa Y."/>
            <person name="Matsunawa H."/>
            <person name="Ichihara T."/>
            <person name="Shiohata N."/>
            <person name="Sano S."/>
            <person name="Moriya S."/>
            <person name="Momiyama H."/>
            <person name="Satoh N."/>
            <person name="Takami S."/>
            <person name="Terashima Y."/>
            <person name="Suzuki O."/>
            <person name="Nakagawa S."/>
            <person name="Senoh A."/>
            <person name="Mizoguchi H."/>
            <person name="Goto Y."/>
            <person name="Shimizu F."/>
            <person name="Wakebe H."/>
            <person name="Hishigaki H."/>
            <person name="Watanabe T."/>
            <person name="Sugiyama A."/>
            <person name="Takemoto M."/>
            <person name="Kawakami B."/>
            <person name="Yamazaki M."/>
            <person name="Watanabe K."/>
            <person name="Kumagai A."/>
            <person name="Itakura S."/>
            <person name="Fukuzumi Y."/>
            <person name="Fujimori Y."/>
            <person name="Komiyama M."/>
            <person name="Tashiro H."/>
            <person name="Tanigami A."/>
            <person name="Fujiwara T."/>
            <person name="Ono T."/>
            <person name="Yamada K."/>
            <person name="Fujii Y."/>
            <person name="Ozaki K."/>
            <person name="Hirao M."/>
            <person name="Ohmori Y."/>
            <person name="Kawabata A."/>
            <person name="Hikiji T."/>
            <person name="Kobatake N."/>
            <person name="Inagaki H."/>
            <person name="Ikema Y."/>
            <person name="Okamoto S."/>
            <person name="Okitani R."/>
            <person name="Kawakami T."/>
            <person name="Noguchi S."/>
            <person name="Itoh T."/>
            <person name="Shigeta K."/>
            <person name="Senba T."/>
            <person name="Matsumura K."/>
            <person name="Nakajima Y."/>
            <person name="Mizuno T."/>
            <person name="Morinaga M."/>
            <person name="Sasaki M."/>
            <person name="Togashi T."/>
            <person name="Oyama M."/>
            <person name="Hata H."/>
            <person name="Watanabe M."/>
            <person name="Komatsu T."/>
            <person name="Mizushima-Sugano J."/>
            <person name="Satoh T."/>
            <person name="Shirai Y."/>
            <person name="Takahashi Y."/>
            <person name="Nakagawa K."/>
            <person name="Okumura K."/>
            <person name="Nagase T."/>
            <person name="Nomura N."/>
            <person name="Kikuchi H."/>
            <person name="Masuho Y."/>
            <person name="Yamashita R."/>
            <person name="Nakai K."/>
            <person name="Yada T."/>
            <person name="Nakamura Y."/>
            <person name="Ohara O."/>
            <person name="Isogai T."/>
            <person name="Sugano S."/>
        </authorList>
    </citation>
    <scope>NUCLEOTIDE SEQUENCE [LARGE SCALE MRNA] (ISOFORM 6)</scope>
    <scope>NUCLEOTIDE SEQUENCE [LARGE SCALE MRNA] OF 381-829 (ISOFORM 1)</scope>
    <scope>VARIANT GLY-112</scope>
    <source>
        <tissue>Hippocampus</tissue>
    </source>
</reference>
<reference key="4">
    <citation type="journal article" date="2006" name="Nature">
        <title>Analysis of the DNA sequence and duplication history of human chromosome 15.</title>
        <authorList>
            <person name="Zody M.C."/>
            <person name="Garber M."/>
            <person name="Sharpe T."/>
            <person name="Young S.K."/>
            <person name="Rowen L."/>
            <person name="O'Neill K."/>
            <person name="Whittaker C.A."/>
            <person name="Kamal M."/>
            <person name="Chang J.L."/>
            <person name="Cuomo C.A."/>
            <person name="Dewar K."/>
            <person name="FitzGerald M.G."/>
            <person name="Kodira C.D."/>
            <person name="Madan A."/>
            <person name="Qin S."/>
            <person name="Yang X."/>
            <person name="Abbasi N."/>
            <person name="Abouelleil A."/>
            <person name="Arachchi H.M."/>
            <person name="Baradarani L."/>
            <person name="Birditt B."/>
            <person name="Bloom S."/>
            <person name="Bloom T."/>
            <person name="Borowsky M.L."/>
            <person name="Burke J."/>
            <person name="Butler J."/>
            <person name="Cook A."/>
            <person name="DeArellano K."/>
            <person name="DeCaprio D."/>
            <person name="Dorris L. III"/>
            <person name="Dors M."/>
            <person name="Eichler E.E."/>
            <person name="Engels R."/>
            <person name="Fahey J."/>
            <person name="Fleetwood P."/>
            <person name="Friedman C."/>
            <person name="Gearin G."/>
            <person name="Hall J.L."/>
            <person name="Hensley G."/>
            <person name="Johnson E."/>
            <person name="Jones C."/>
            <person name="Kamat A."/>
            <person name="Kaur A."/>
            <person name="Locke D.P."/>
            <person name="Madan A."/>
            <person name="Munson G."/>
            <person name="Jaffe D.B."/>
            <person name="Lui A."/>
            <person name="Macdonald P."/>
            <person name="Mauceli E."/>
            <person name="Naylor J.W."/>
            <person name="Nesbitt R."/>
            <person name="Nicol R."/>
            <person name="O'Leary S.B."/>
            <person name="Ratcliffe A."/>
            <person name="Rounsley S."/>
            <person name="She X."/>
            <person name="Sneddon K.M.B."/>
            <person name="Stewart S."/>
            <person name="Sougnez C."/>
            <person name="Stone S.M."/>
            <person name="Topham K."/>
            <person name="Vincent D."/>
            <person name="Wang S."/>
            <person name="Zimmer A.R."/>
            <person name="Birren B.W."/>
            <person name="Hood L."/>
            <person name="Lander E.S."/>
            <person name="Nusbaum C."/>
        </authorList>
    </citation>
    <scope>NUCLEOTIDE SEQUENCE [LARGE SCALE GENOMIC DNA]</scope>
</reference>
<reference key="5">
    <citation type="submission" date="2005-07" db="EMBL/GenBank/DDBJ databases">
        <authorList>
            <person name="Mural R.J."/>
            <person name="Istrail S."/>
            <person name="Sutton G.G."/>
            <person name="Florea L."/>
            <person name="Halpern A.L."/>
            <person name="Mobarry C.M."/>
            <person name="Lippert R."/>
            <person name="Walenz B."/>
            <person name="Shatkay H."/>
            <person name="Dew I."/>
            <person name="Miller J.R."/>
            <person name="Flanigan M.J."/>
            <person name="Edwards N.J."/>
            <person name="Bolanos R."/>
            <person name="Fasulo D."/>
            <person name="Halldorsson B.V."/>
            <person name="Hannenhalli S."/>
            <person name="Turner R."/>
            <person name="Yooseph S."/>
            <person name="Lu F."/>
            <person name="Nusskern D.R."/>
            <person name="Shue B.C."/>
            <person name="Zheng X.H."/>
            <person name="Zhong F."/>
            <person name="Delcher A.L."/>
            <person name="Huson D.H."/>
            <person name="Kravitz S.A."/>
            <person name="Mouchard L."/>
            <person name="Reinert K."/>
            <person name="Remington K.A."/>
            <person name="Clark A.G."/>
            <person name="Waterman M.S."/>
            <person name="Eichler E.E."/>
            <person name="Adams M.D."/>
            <person name="Hunkapiller M.W."/>
            <person name="Myers E.W."/>
            <person name="Venter J.C."/>
        </authorList>
    </citation>
    <scope>NUCLEOTIDE SEQUENCE [LARGE SCALE GENOMIC DNA]</scope>
</reference>
<reference key="6">
    <citation type="journal article" date="2004" name="Genome Res.">
        <title>The status, quality, and expansion of the NIH full-length cDNA project: the Mammalian Gene Collection (MGC).</title>
        <authorList>
            <consortium name="The MGC Project Team"/>
        </authorList>
    </citation>
    <scope>NUCLEOTIDE SEQUENCE [LARGE SCALE MRNA] (ISOFORM 1)</scope>
    <scope>VARIANT GLY-112</scope>
    <source>
        <tissue>Liver</tissue>
        <tissue>Placenta</tissue>
    </source>
</reference>
<reference key="7">
    <citation type="journal article" date="1998" name="Biochem. Biophys. Res. Commun.">
        <title>Isolation and characterization of PDE8A, a novel human cAMP-specific phosphodiesterase.</title>
        <authorList>
            <person name="Fisher D.A."/>
            <person name="Smith J.F."/>
            <person name="Pillar J.S."/>
            <person name="St Denis S.H."/>
            <person name="Cheng J.B."/>
        </authorList>
    </citation>
    <scope>NUCLEOTIDE SEQUENCE [MRNA] OF 117-829 (ISOFORMS 1 AND 2)</scope>
</reference>
<reference key="8">
    <citation type="submission" date="1999-07" db="EMBL/GenBank/DDBJ databases">
        <authorList>
            <consortium name="The European IMAGE consortium"/>
        </authorList>
    </citation>
    <scope>NUCLEOTIDE SEQUENCE [LARGE SCALE MRNA] OF 554-829</scope>
</reference>
<reference key="9">
    <citation type="journal article" date="2008" name="Mol. Cell">
        <title>Kinase-selective enrichment enables quantitative phosphoproteomics of the kinome across the cell cycle.</title>
        <authorList>
            <person name="Daub H."/>
            <person name="Olsen J.V."/>
            <person name="Bairlein M."/>
            <person name="Gnad F."/>
            <person name="Oppermann F.S."/>
            <person name="Korner R."/>
            <person name="Greff Z."/>
            <person name="Keri G."/>
            <person name="Stemmann O."/>
            <person name="Mann M."/>
        </authorList>
    </citation>
    <scope>PHOSPHORYLATION [LARGE SCALE ANALYSIS] AT SER-20 AND SER-457</scope>
    <scope>IDENTIFICATION BY MASS SPECTROMETRY [LARGE SCALE ANALYSIS]</scope>
    <source>
        <tissue>Cervix carcinoma</tissue>
    </source>
</reference>
<reference key="10">
    <citation type="journal article" date="2008" name="Proc. Natl. Acad. Sci. U.S.A.">
        <title>A quantitative atlas of mitotic phosphorylation.</title>
        <authorList>
            <person name="Dephoure N."/>
            <person name="Zhou C."/>
            <person name="Villen J."/>
            <person name="Beausoleil S.A."/>
            <person name="Bakalarski C.E."/>
            <person name="Elledge S.J."/>
            <person name="Gygi S.P."/>
        </authorList>
    </citation>
    <scope>PHOSPHORYLATION [LARGE SCALE ANALYSIS] AT SER-457</scope>
    <scope>IDENTIFICATION BY MASS SPECTROMETRY [LARGE SCALE ANALYSIS]</scope>
    <source>
        <tissue>Cervix carcinoma</tissue>
    </source>
</reference>
<reference key="11">
    <citation type="journal article" date="2010" name="Sci. Signal.">
        <title>Quantitative phosphoproteomics reveals widespread full phosphorylation site occupancy during mitosis.</title>
        <authorList>
            <person name="Olsen J.V."/>
            <person name="Vermeulen M."/>
            <person name="Santamaria A."/>
            <person name="Kumar C."/>
            <person name="Miller M.L."/>
            <person name="Jensen L.J."/>
            <person name="Gnad F."/>
            <person name="Cox J."/>
            <person name="Jensen T.S."/>
            <person name="Nigg E.A."/>
            <person name="Brunak S."/>
            <person name="Mann M."/>
        </authorList>
    </citation>
    <scope>PHOSPHORYLATION [LARGE SCALE ANALYSIS] AT SER-457</scope>
    <scope>IDENTIFICATION BY MASS SPECTROMETRY [LARGE SCALE ANALYSIS]</scope>
    <source>
        <tissue>Cervix carcinoma</tissue>
    </source>
</reference>
<reference key="12">
    <citation type="journal article" date="2012" name="FEBS Lett.">
        <title>Cyclic AMP-specific phosphodiesterase, PDE8A1, is activated by protein kinase A-mediated phosphorylation.</title>
        <authorList>
            <person name="Brown K.M."/>
            <person name="Lee L.C."/>
            <person name="Findlay J.E."/>
            <person name="Day J.P."/>
            <person name="Baillie G.S."/>
        </authorList>
    </citation>
    <scope>PHOSPHORYLATION AT SER-359</scope>
</reference>
<reference key="13">
    <citation type="journal article" date="2013" name="J. Proteome Res.">
        <title>Toward a comprehensive characterization of a human cancer cell phosphoproteome.</title>
        <authorList>
            <person name="Zhou H."/>
            <person name="Di Palma S."/>
            <person name="Preisinger C."/>
            <person name="Peng M."/>
            <person name="Polat A.N."/>
            <person name="Heck A.J."/>
            <person name="Mohammed S."/>
        </authorList>
    </citation>
    <scope>PHOSPHORYLATION [LARGE SCALE ANALYSIS] AT SER-20 AND SER-457</scope>
    <scope>IDENTIFICATION BY MASS SPECTROMETRY [LARGE SCALE ANALYSIS]</scope>
    <source>
        <tissue>Cervix carcinoma</tissue>
        <tissue>Erythroleukemia</tissue>
    </source>
</reference>
<reference key="14">
    <citation type="journal article" date="2013" name="Proc. Natl. Acad. Sci. U.S.A.">
        <title>Phosphodiesterase-8A binds to and regulates Raf-1 kinase.</title>
        <authorList>
            <person name="Brown K.M."/>
            <person name="Day J.P."/>
            <person name="Huston E."/>
            <person name="Zimmermann B."/>
            <person name="Hampel K."/>
            <person name="Christian F."/>
            <person name="Romano D."/>
            <person name="Terhzaz S."/>
            <person name="Lee L.C."/>
            <person name="Willis M.J."/>
            <person name="Morton D.B."/>
            <person name="Beavo J.A."/>
            <person name="Shimizu-Albergine M."/>
            <person name="Davies S.A."/>
            <person name="Kolch W."/>
            <person name="Houslay M.D."/>
            <person name="Baillie G.S."/>
        </authorList>
    </citation>
    <scope>FUNCTION</scope>
    <scope>INTERACTION WITH RAF1</scope>
    <scope>MUTAGENESIS OF 454-ARG-ARG-455 AND 460-GLU-LYS-461</scope>
    <scope>IDENTIFICATION BY MASS SPECTROMETRY</scope>
</reference>
<reference key="15">
    <citation type="journal article" date="2008" name="Biochemistry">
        <title>Kinetic and structural studies of phosphodiesterase-8A and implication on the inhibitor selectivity.</title>
        <authorList>
            <person name="Wang H."/>
            <person name="Yan Z."/>
            <person name="Yang S."/>
            <person name="Cai J."/>
            <person name="Robinson H."/>
            <person name="Ke H."/>
        </authorList>
    </citation>
    <scope>X-RAY CRYSTALLOGRAPHY (1.90 ANGSTROMS) OF 482-819 IN COMPLEX WITH METAL IONS AND THE INHIBITOR IBMX</scope>
    <scope>FUNCTION</scope>
    <scope>COFACTOR</scope>
    <scope>MUTAGENESIS OF TYR-748</scope>
</reference>
<keyword id="KW-0002">3D-structure</keyword>
<keyword id="KW-0025">Alternative splicing</keyword>
<keyword id="KW-0114">cAMP</keyword>
<keyword id="KW-0378">Hydrolase</keyword>
<keyword id="KW-0479">Metal-binding</keyword>
<keyword id="KW-0597">Phosphoprotein</keyword>
<keyword id="KW-1267">Proteomics identification</keyword>
<keyword id="KW-1185">Reference proteome</keyword>
<name>PDE8A_HUMAN</name>
<evidence type="ECO:0000250" key="1">
    <source>
        <dbReference type="UniProtKB" id="O76083"/>
    </source>
</evidence>
<evidence type="ECO:0000250" key="2">
    <source>
        <dbReference type="UniProtKB" id="O88502"/>
    </source>
</evidence>
<evidence type="ECO:0000250" key="3">
    <source>
        <dbReference type="UniProtKB" id="O95263"/>
    </source>
</evidence>
<evidence type="ECO:0000255" key="4">
    <source>
        <dbReference type="PROSITE-ProRule" id="PRU00140"/>
    </source>
</evidence>
<evidence type="ECO:0000255" key="5">
    <source>
        <dbReference type="PROSITE-ProRule" id="PRU01192"/>
    </source>
</evidence>
<evidence type="ECO:0000256" key="6">
    <source>
        <dbReference type="SAM" id="MobiDB-lite"/>
    </source>
</evidence>
<evidence type="ECO:0000269" key="7">
    <source>
    </source>
</evidence>
<evidence type="ECO:0000269" key="8">
    <source>
    </source>
</evidence>
<evidence type="ECO:0000269" key="9">
    <source>
    </source>
</evidence>
<evidence type="ECO:0000269" key="10">
    <source>
    </source>
</evidence>
<evidence type="ECO:0000269" key="11">
    <source>
    </source>
</evidence>
<evidence type="ECO:0000303" key="12">
    <source>
    </source>
</evidence>
<evidence type="ECO:0000303" key="13">
    <source>
    </source>
</evidence>
<evidence type="ECO:0000303" key="14">
    <source>
    </source>
</evidence>
<evidence type="ECO:0000305" key="15"/>
<evidence type="ECO:0007744" key="16">
    <source>
        <dbReference type="PDB" id="3ECM"/>
    </source>
</evidence>
<evidence type="ECO:0007744" key="17">
    <source>
        <dbReference type="PDB" id="3ECN"/>
    </source>
</evidence>
<evidence type="ECO:0007744" key="18">
    <source>
    </source>
</evidence>
<evidence type="ECO:0007744" key="19">
    <source>
    </source>
</evidence>
<evidence type="ECO:0007744" key="20">
    <source>
    </source>
</evidence>
<evidence type="ECO:0007744" key="21">
    <source>
    </source>
</evidence>
<evidence type="ECO:0007829" key="22">
    <source>
        <dbReference type="PDB" id="3ECM"/>
    </source>
</evidence>
<evidence type="ECO:0007829" key="23">
    <source>
        <dbReference type="PDB" id="3ECN"/>
    </source>
</evidence>
<dbReference type="EC" id="3.1.4.53" evidence="3"/>
<dbReference type="EMBL" id="AF388183">
    <property type="protein sequence ID" value="AAL18610.1"/>
    <property type="molecule type" value="mRNA"/>
</dbReference>
<dbReference type="EMBL" id="AF388184">
    <property type="protein sequence ID" value="AAL18611.1"/>
    <property type="molecule type" value="mRNA"/>
</dbReference>
<dbReference type="EMBL" id="AF388185">
    <property type="protein sequence ID" value="AAL18612.1"/>
    <property type="status" value="ALT_SEQ"/>
    <property type="molecule type" value="mRNA"/>
</dbReference>
<dbReference type="EMBL" id="AF388186">
    <property type="protein sequence ID" value="AAL18613.1"/>
    <property type="status" value="ALT_SEQ"/>
    <property type="molecule type" value="mRNA"/>
</dbReference>
<dbReference type="EMBL" id="AF388187">
    <property type="protein sequence ID" value="AAL18614.1"/>
    <property type="status" value="ALT_SEQ"/>
    <property type="molecule type" value="mRNA"/>
</dbReference>
<dbReference type="EMBL" id="AF332653">
    <property type="protein sequence ID" value="AAK57641.1"/>
    <property type="molecule type" value="mRNA"/>
</dbReference>
<dbReference type="EMBL" id="AK074280">
    <property type="status" value="NOT_ANNOTATED_CDS"/>
    <property type="molecule type" value="mRNA"/>
</dbReference>
<dbReference type="EMBL" id="AK127232">
    <property type="protein sequence ID" value="BAG54458.1"/>
    <property type="status" value="ALT_SEQ"/>
    <property type="molecule type" value="mRNA"/>
</dbReference>
<dbReference type="EMBL" id="AC027078">
    <property type="status" value="NOT_ANNOTATED_CDS"/>
    <property type="molecule type" value="Genomic_DNA"/>
</dbReference>
<dbReference type="EMBL" id="AC087468">
    <property type="status" value="NOT_ANNOTATED_CDS"/>
    <property type="molecule type" value="Genomic_DNA"/>
</dbReference>
<dbReference type="EMBL" id="CH471101">
    <property type="protein sequence ID" value="EAX01967.1"/>
    <property type="status" value="ALT_SEQ"/>
    <property type="molecule type" value="Genomic_DNA"/>
</dbReference>
<dbReference type="EMBL" id="BC060762">
    <property type="protein sequence ID" value="AAH60762.1"/>
    <property type="molecule type" value="mRNA"/>
</dbReference>
<dbReference type="EMBL" id="BC075822">
    <property type="protein sequence ID" value="AAH75822.1"/>
    <property type="molecule type" value="mRNA"/>
</dbReference>
<dbReference type="EMBL" id="AF056490">
    <property type="protein sequence ID" value="AAC39763.1"/>
    <property type="molecule type" value="mRNA"/>
</dbReference>
<dbReference type="EMBL" id="AL109687">
    <property type="protein sequence ID" value="CAB52020.1"/>
    <property type="molecule type" value="mRNA"/>
</dbReference>
<dbReference type="EMBL" id="AL109778">
    <property type="protein sequence ID" value="CAB52432.1"/>
    <property type="molecule type" value="mRNA"/>
</dbReference>
<dbReference type="CCDS" id="CCDS10336.1">
    <molecule id="O60658-1"/>
</dbReference>
<dbReference type="CCDS" id="CCDS10337.1">
    <molecule id="O60658-2"/>
</dbReference>
<dbReference type="CCDS" id="CCDS58397.1">
    <molecule id="O60658-6"/>
</dbReference>
<dbReference type="PIR" id="JW0088">
    <property type="entry name" value="JW0088"/>
</dbReference>
<dbReference type="RefSeq" id="NP_001230066.1">
    <molecule id="O60658-6"/>
    <property type="nucleotide sequence ID" value="NM_001243137.2"/>
</dbReference>
<dbReference type="RefSeq" id="NP_002596.1">
    <molecule id="O60658-1"/>
    <property type="nucleotide sequence ID" value="NM_002605.3"/>
</dbReference>
<dbReference type="RefSeq" id="NP_775656.1">
    <molecule id="O60658-2"/>
    <property type="nucleotide sequence ID" value="NM_173454.1"/>
</dbReference>
<dbReference type="RefSeq" id="XP_016877800.1">
    <property type="nucleotide sequence ID" value="XM_017022311.1"/>
</dbReference>
<dbReference type="RefSeq" id="XP_047288612.1">
    <molecule id="O60658-6"/>
    <property type="nucleotide sequence ID" value="XM_047432656.1"/>
</dbReference>
<dbReference type="RefSeq" id="XP_054234150.1">
    <molecule id="O60658-6"/>
    <property type="nucleotide sequence ID" value="XM_054378175.1"/>
</dbReference>
<dbReference type="PDB" id="3ECM">
    <property type="method" value="X-ray"/>
    <property type="resolution" value="1.90 A"/>
    <property type="chains" value="A=482-819"/>
</dbReference>
<dbReference type="PDB" id="3ECN">
    <property type="method" value="X-ray"/>
    <property type="resolution" value="2.10 A"/>
    <property type="chains" value="A/B=482-819"/>
</dbReference>
<dbReference type="PDB" id="7CWA">
    <property type="method" value="X-ray"/>
    <property type="resolution" value="2.80 A"/>
    <property type="chains" value="A=482-819"/>
</dbReference>
<dbReference type="PDB" id="7CWF">
    <property type="method" value="X-ray"/>
    <property type="resolution" value="2.80 A"/>
    <property type="chains" value="A=482-819"/>
</dbReference>
<dbReference type="PDB" id="7CWG">
    <property type="method" value="X-ray"/>
    <property type="resolution" value="2.80 A"/>
    <property type="chains" value="A=482-819"/>
</dbReference>
<dbReference type="PDB" id="7VSL">
    <property type="method" value="X-ray"/>
    <property type="resolution" value="2.50 A"/>
    <property type="chains" value="A=482-819"/>
</dbReference>
<dbReference type="PDB" id="7VTV">
    <property type="method" value="X-ray"/>
    <property type="resolution" value="2.80 A"/>
    <property type="chains" value="A=482-819"/>
</dbReference>
<dbReference type="PDB" id="7VTW">
    <property type="method" value="X-ray"/>
    <property type="resolution" value="2.80 A"/>
    <property type="chains" value="A=482-819"/>
</dbReference>
<dbReference type="PDB" id="7VTX">
    <property type="method" value="X-ray"/>
    <property type="resolution" value="2.50 A"/>
    <property type="chains" value="A=482-819"/>
</dbReference>
<dbReference type="PDBsum" id="3ECM"/>
<dbReference type="PDBsum" id="3ECN"/>
<dbReference type="PDBsum" id="7CWA"/>
<dbReference type="PDBsum" id="7CWF"/>
<dbReference type="PDBsum" id="7CWG"/>
<dbReference type="PDBsum" id="7VSL"/>
<dbReference type="PDBsum" id="7VTV"/>
<dbReference type="PDBsum" id="7VTW"/>
<dbReference type="PDBsum" id="7VTX"/>
<dbReference type="SMR" id="O60658"/>
<dbReference type="BioGRID" id="111177">
    <property type="interactions" value="27"/>
</dbReference>
<dbReference type="CORUM" id="O60658"/>
<dbReference type="FunCoup" id="O60658">
    <property type="interactions" value="656"/>
</dbReference>
<dbReference type="IntAct" id="O60658">
    <property type="interactions" value="10"/>
</dbReference>
<dbReference type="STRING" id="9606.ENSP00000378056"/>
<dbReference type="BindingDB" id="O60658"/>
<dbReference type="ChEMBL" id="CHEMBL4640"/>
<dbReference type="DrugBank" id="DB07954">
    <property type="generic name" value="3-isobutyl-1-methyl-7H-xanthine"/>
</dbReference>
<dbReference type="DrugBank" id="DB00201">
    <property type="generic name" value="Caffeine"/>
</dbReference>
<dbReference type="DrugBank" id="DB09283">
    <property type="generic name" value="Trapidil"/>
</dbReference>
<dbReference type="DrugCentral" id="O60658"/>
<dbReference type="GuidetoPHARMACOLOGY" id="1307"/>
<dbReference type="iPTMnet" id="O60658"/>
<dbReference type="PhosphoSitePlus" id="O60658"/>
<dbReference type="SwissPalm" id="O60658"/>
<dbReference type="BioMuta" id="PDE8A"/>
<dbReference type="jPOST" id="O60658"/>
<dbReference type="MassIVE" id="O60658"/>
<dbReference type="PaxDb" id="9606-ENSP00000311453"/>
<dbReference type="PeptideAtlas" id="O60658"/>
<dbReference type="ProteomicsDB" id="40410"/>
<dbReference type="ProteomicsDB" id="49499">
    <molecule id="O60658-1"/>
</dbReference>
<dbReference type="ProteomicsDB" id="49500">
    <molecule id="O60658-2"/>
</dbReference>
<dbReference type="ProteomicsDB" id="49501">
    <molecule id="O60658-3"/>
</dbReference>
<dbReference type="ProteomicsDB" id="49502">
    <molecule id="O60658-4"/>
</dbReference>
<dbReference type="ProteomicsDB" id="49503">
    <molecule id="O60658-5"/>
</dbReference>
<dbReference type="Pumba" id="O60658"/>
<dbReference type="Antibodypedia" id="679">
    <property type="antibodies" value="289 antibodies from 31 providers"/>
</dbReference>
<dbReference type="DNASU" id="5151"/>
<dbReference type="Ensembl" id="ENST00000310298.8">
    <molecule id="O60658-1"/>
    <property type="protein sequence ID" value="ENSP00000311453.4"/>
    <property type="gene ID" value="ENSG00000073417.15"/>
</dbReference>
<dbReference type="Ensembl" id="ENST00000339708.9">
    <molecule id="O60658-2"/>
    <property type="protein sequence ID" value="ENSP00000340679.5"/>
    <property type="gene ID" value="ENSG00000073417.15"/>
</dbReference>
<dbReference type="Ensembl" id="ENST00000394553.6">
    <molecule id="O60658-1"/>
    <property type="protein sequence ID" value="ENSP00000378056.1"/>
    <property type="gene ID" value="ENSG00000073417.15"/>
</dbReference>
<dbReference type="Ensembl" id="ENST00000478717.5">
    <molecule id="O60658-4"/>
    <property type="protein sequence ID" value="ENSP00000432309.1"/>
    <property type="gene ID" value="ENSG00000073417.15"/>
</dbReference>
<dbReference type="Ensembl" id="ENST00000557957.5">
    <molecule id="O60658-6"/>
    <property type="protein sequence ID" value="ENSP00000453808.1"/>
    <property type="gene ID" value="ENSG00000073417.15"/>
</dbReference>
<dbReference type="GeneID" id="5151"/>
<dbReference type="KEGG" id="hsa:5151"/>
<dbReference type="MANE-Select" id="ENST00000394553.6">
    <property type="protein sequence ID" value="ENSP00000378056.1"/>
    <property type="RefSeq nucleotide sequence ID" value="NM_002605.3"/>
    <property type="RefSeq protein sequence ID" value="NP_002596.1"/>
</dbReference>
<dbReference type="UCSC" id="uc002blh.4">
    <molecule id="O60658-1"/>
    <property type="organism name" value="human"/>
</dbReference>
<dbReference type="AGR" id="HGNC:8793"/>
<dbReference type="CTD" id="5151"/>
<dbReference type="DisGeNET" id="5151"/>
<dbReference type="GeneCards" id="PDE8A"/>
<dbReference type="HGNC" id="HGNC:8793">
    <property type="gene designation" value="PDE8A"/>
</dbReference>
<dbReference type="HPA" id="ENSG00000073417">
    <property type="expression patterns" value="Low tissue specificity"/>
</dbReference>
<dbReference type="MIM" id="602972">
    <property type="type" value="gene"/>
</dbReference>
<dbReference type="neXtProt" id="NX_O60658"/>
<dbReference type="OpenTargets" id="ENSG00000073417"/>
<dbReference type="PharmGKB" id="PA33141"/>
<dbReference type="VEuPathDB" id="HostDB:ENSG00000073417"/>
<dbReference type="eggNOG" id="KOG1229">
    <property type="taxonomic scope" value="Eukaryota"/>
</dbReference>
<dbReference type="GeneTree" id="ENSGT00940000156422"/>
<dbReference type="HOGENOM" id="CLU_005940_4_2_1"/>
<dbReference type="InParanoid" id="O60658"/>
<dbReference type="OMA" id="NSCIKFE"/>
<dbReference type="OrthoDB" id="189220at2759"/>
<dbReference type="PAN-GO" id="O60658">
    <property type="GO annotations" value="4 GO annotations based on evolutionary models"/>
</dbReference>
<dbReference type="PhylomeDB" id="O60658"/>
<dbReference type="TreeFam" id="TF314638"/>
<dbReference type="BRENDA" id="3.1.4.53">
    <property type="organism ID" value="2681"/>
</dbReference>
<dbReference type="PathwayCommons" id="O60658"/>
<dbReference type="Reactome" id="R-HSA-418555">
    <property type="pathway name" value="G alpha (s) signalling events"/>
</dbReference>
<dbReference type="SignaLink" id="O60658"/>
<dbReference type="SIGNOR" id="O60658"/>
<dbReference type="UniPathway" id="UPA00762">
    <property type="reaction ID" value="UER00747"/>
</dbReference>
<dbReference type="BioGRID-ORCS" id="5151">
    <property type="hits" value="8 hits in 1166 CRISPR screens"/>
</dbReference>
<dbReference type="CD-CODE" id="FB4E32DD">
    <property type="entry name" value="Presynaptic clusters and postsynaptic densities"/>
</dbReference>
<dbReference type="ChiTaRS" id="PDE8A">
    <property type="organism name" value="human"/>
</dbReference>
<dbReference type="EvolutionaryTrace" id="O60658"/>
<dbReference type="GeneWiki" id="PDE8A"/>
<dbReference type="GenomeRNAi" id="5151"/>
<dbReference type="Pharos" id="O60658">
    <property type="development level" value="Tclin"/>
</dbReference>
<dbReference type="PRO" id="PR:O60658"/>
<dbReference type="Proteomes" id="UP000005640">
    <property type="component" value="Chromosome 15"/>
</dbReference>
<dbReference type="RNAct" id="O60658">
    <property type="molecule type" value="protein"/>
</dbReference>
<dbReference type="Bgee" id="ENSG00000073417">
    <property type="expression patterns" value="Expressed in corpus callosum and 211 other cell types or tissues"/>
</dbReference>
<dbReference type="ExpressionAtlas" id="O60658">
    <property type="expression patterns" value="baseline and differential"/>
</dbReference>
<dbReference type="GO" id="GO:0005829">
    <property type="term" value="C:cytosol"/>
    <property type="evidence" value="ECO:0000304"/>
    <property type="project" value="Reactome"/>
</dbReference>
<dbReference type="GO" id="GO:0070062">
    <property type="term" value="C:extracellular exosome"/>
    <property type="evidence" value="ECO:0007005"/>
    <property type="project" value="UniProtKB"/>
</dbReference>
<dbReference type="GO" id="GO:0004115">
    <property type="term" value="F:3',5'-cyclic-AMP phosphodiesterase activity"/>
    <property type="evidence" value="ECO:0000315"/>
    <property type="project" value="UniProtKB"/>
</dbReference>
<dbReference type="GO" id="GO:0047555">
    <property type="term" value="F:3',5'-cyclic-GMP phosphodiesterase activity"/>
    <property type="evidence" value="ECO:0000314"/>
    <property type="project" value="UniProtKB"/>
</dbReference>
<dbReference type="GO" id="GO:0019900">
    <property type="term" value="F:kinase binding"/>
    <property type="evidence" value="ECO:0000353"/>
    <property type="project" value="UniProtKB"/>
</dbReference>
<dbReference type="GO" id="GO:0046872">
    <property type="term" value="F:metal ion binding"/>
    <property type="evidence" value="ECO:0007669"/>
    <property type="project" value="UniProtKB-KW"/>
</dbReference>
<dbReference type="GO" id="GO:0030295">
    <property type="term" value="F:protein kinase activator activity"/>
    <property type="evidence" value="ECO:0000315"/>
    <property type="project" value="UniProtKB"/>
</dbReference>
<dbReference type="GO" id="GO:0006198">
    <property type="term" value="P:cAMP catabolic process"/>
    <property type="evidence" value="ECO:0007669"/>
    <property type="project" value="UniProtKB-UniPathway"/>
</dbReference>
<dbReference type="GO" id="GO:0019933">
    <property type="term" value="P:cAMP-mediated signaling"/>
    <property type="evidence" value="ECO:0000318"/>
    <property type="project" value="GO_Central"/>
</dbReference>
<dbReference type="GO" id="GO:0071364">
    <property type="term" value="P:cellular response to epidermal growth factor stimulus"/>
    <property type="evidence" value="ECO:0000315"/>
    <property type="project" value="UniProtKB"/>
</dbReference>
<dbReference type="GO" id="GO:0070374">
    <property type="term" value="P:positive regulation of ERK1 and ERK2 cascade"/>
    <property type="evidence" value="ECO:0000315"/>
    <property type="project" value="UniProtKB"/>
</dbReference>
<dbReference type="GO" id="GO:0006355">
    <property type="term" value="P:regulation of DNA-templated transcription"/>
    <property type="evidence" value="ECO:0007669"/>
    <property type="project" value="InterPro"/>
</dbReference>
<dbReference type="CDD" id="cd00077">
    <property type="entry name" value="HDc"/>
    <property type="match status" value="1"/>
</dbReference>
<dbReference type="CDD" id="cd00130">
    <property type="entry name" value="PAS"/>
    <property type="match status" value="1"/>
</dbReference>
<dbReference type="FunFam" id="1.10.1300.10:FF:000002">
    <property type="entry name" value="Phosphodiesterase"/>
    <property type="match status" value="1"/>
</dbReference>
<dbReference type="FunFam" id="3.30.450.20:FF:000040">
    <property type="entry name" value="Phosphodiesterase"/>
    <property type="match status" value="1"/>
</dbReference>
<dbReference type="FunFam" id="3.40.50.2300:FF:000209">
    <property type="entry name" value="Phosphodiesterase"/>
    <property type="match status" value="1"/>
</dbReference>
<dbReference type="Gene3D" id="3.40.50.2300">
    <property type="match status" value="1"/>
</dbReference>
<dbReference type="Gene3D" id="1.10.1300.10">
    <property type="entry name" value="3'5'-cyclic nucleotide phosphodiesterase, catalytic domain"/>
    <property type="match status" value="1"/>
</dbReference>
<dbReference type="Gene3D" id="3.30.450.20">
    <property type="entry name" value="PAS domain"/>
    <property type="match status" value="1"/>
</dbReference>
<dbReference type="InterPro" id="IPR003607">
    <property type="entry name" value="HD/PDEase_dom"/>
</dbReference>
<dbReference type="InterPro" id="IPR000014">
    <property type="entry name" value="PAS"/>
</dbReference>
<dbReference type="InterPro" id="IPR035965">
    <property type="entry name" value="PAS-like_dom_sf"/>
</dbReference>
<dbReference type="InterPro" id="IPR013767">
    <property type="entry name" value="PAS_fold"/>
</dbReference>
<dbReference type="InterPro" id="IPR023088">
    <property type="entry name" value="PDEase"/>
</dbReference>
<dbReference type="InterPro" id="IPR002073">
    <property type="entry name" value="PDEase_catalytic_dom"/>
</dbReference>
<dbReference type="InterPro" id="IPR036971">
    <property type="entry name" value="PDEase_catalytic_dom_sf"/>
</dbReference>
<dbReference type="InterPro" id="IPR023174">
    <property type="entry name" value="PDEase_CS"/>
</dbReference>
<dbReference type="NCBIfam" id="TIGR00229">
    <property type="entry name" value="sensory_box"/>
    <property type="match status" value="1"/>
</dbReference>
<dbReference type="PANTHER" id="PTHR11347">
    <property type="entry name" value="CYCLIC NUCLEOTIDE PHOSPHODIESTERASE"/>
    <property type="match status" value="1"/>
</dbReference>
<dbReference type="Pfam" id="PF00989">
    <property type="entry name" value="PAS"/>
    <property type="match status" value="1"/>
</dbReference>
<dbReference type="Pfam" id="PF23198">
    <property type="entry name" value="PDE8A_N"/>
    <property type="match status" value="1"/>
</dbReference>
<dbReference type="Pfam" id="PF00233">
    <property type="entry name" value="PDEase_I"/>
    <property type="match status" value="1"/>
</dbReference>
<dbReference type="PRINTS" id="PR00387">
    <property type="entry name" value="PDIESTERASE1"/>
</dbReference>
<dbReference type="SMART" id="SM00471">
    <property type="entry name" value="HDc"/>
    <property type="match status" value="1"/>
</dbReference>
<dbReference type="SUPFAM" id="SSF109604">
    <property type="entry name" value="HD-domain/PDEase-like"/>
    <property type="match status" value="1"/>
</dbReference>
<dbReference type="SUPFAM" id="SSF55785">
    <property type="entry name" value="PYP-like sensor domain (PAS domain)"/>
    <property type="match status" value="1"/>
</dbReference>
<dbReference type="PROSITE" id="PS50112">
    <property type="entry name" value="PAS"/>
    <property type="match status" value="1"/>
</dbReference>
<dbReference type="PROSITE" id="PS00126">
    <property type="entry name" value="PDEASE_I_1"/>
    <property type="match status" value="1"/>
</dbReference>
<dbReference type="PROSITE" id="PS51845">
    <property type="entry name" value="PDEASE_I_2"/>
    <property type="match status" value="1"/>
</dbReference>
<comment type="function">
    <text evidence="9 11">Hydrolyzes the second messenger cAMP, which is a key regulator of many important physiological processes (PubMed:18983167). May be involved in maintaining basal levels of the cyclic nucleotide and/or in the cAMP regulation of germ cell development (PubMed:18983167). Binding to RAF1 reduces RAF1 'Ser-259' inhibitory-phosphorylation and stimulates RAF1-dependent EGF-activated ERK-signaling (PubMed:23509299). Protects against cell death induced by hydrogen peroxide and staurosporine (PubMed:23509299).</text>
</comment>
<comment type="catalytic activity">
    <reaction evidence="3">
        <text>3',5'-cyclic AMP + H2O = AMP + H(+)</text>
        <dbReference type="Rhea" id="RHEA:25277"/>
        <dbReference type="ChEBI" id="CHEBI:15377"/>
        <dbReference type="ChEBI" id="CHEBI:15378"/>
        <dbReference type="ChEBI" id="CHEBI:58165"/>
        <dbReference type="ChEBI" id="CHEBI:456215"/>
        <dbReference type="EC" id="3.1.4.53"/>
    </reaction>
</comment>
<comment type="cofactor">
    <cofactor evidence="9">
        <name>a divalent metal cation</name>
        <dbReference type="ChEBI" id="CHEBI:60240"/>
    </cofactor>
    <text evidence="9">Binds 2 divalent metal cations per subunit. Site 1 may preferentially bind zinc ions, while site 2 has a preference for magnesium and/or manganese ions.</text>
</comment>
<comment type="activity regulation">
    <text evidence="3">Inhibited by dipyridimole. Insensitive to selective PDE inhibitors including rolipram and zaprinast as well as to the non-selective inhibitor, IBMX. Unaffected by cGMP.</text>
</comment>
<comment type="pathway">
    <text>Purine metabolism; 3',5'-cyclic AMP degradation; AMP from 3',5'-cyclic AMP: step 1/1.</text>
</comment>
<comment type="subunit">
    <text evidence="11">Interacts with RAF1. The interaction promotes RAF1 activity.</text>
</comment>
<comment type="alternative products">
    <event type="alternative splicing"/>
    <isoform>
        <id>O60658-1</id>
        <name>1</name>
        <name>PDE8A1</name>
        <sequence type="displayed"/>
    </isoform>
    <isoform>
        <id>O60658-2</id>
        <name>2</name>
        <name>PDE8A2</name>
        <sequence type="described" ref="VSP_004597"/>
    </isoform>
    <isoform>
        <id>O60658-3</id>
        <name>3</name>
        <name>PDE8A3</name>
        <sequence type="described" ref="VSP_041675 VSP_041677"/>
    </isoform>
    <isoform>
        <id>O60658-4</id>
        <name>4</name>
        <name>PDE8A4</name>
        <sequence type="described" ref="VSP_041674 VSP_041676"/>
    </isoform>
    <isoform>
        <id>O60658-5</id>
        <name>5</name>
        <name>PDE8A5</name>
        <sequence type="described" ref="VSP_041678 VSP_041679"/>
    </isoform>
    <isoform>
        <id>O60658-6</id>
        <name>6</name>
        <sequence type="described" ref="VSP_046017"/>
    </isoform>
</comment>
<comment type="tissue specificity">
    <text>Expressed in most tissues except thymus and peripheral blood leukocytes. Highest levels in testis, ovary, small intestine and colon.</text>
</comment>
<comment type="domain">
    <text>Composed of a C-terminal catalytic domain containing two putative divalent metal sites and an N-terminal regulatory domain.</text>
</comment>
<comment type="PTM">
    <text evidence="10">Phosphorylated at Ser-359 by PKA under elevated cAMP conditions, this enhances catalytic activity.</text>
</comment>
<comment type="miscellaneous">
    <molecule>Isoform 3</molecule>
    <text evidence="15">May be produced at very low levels due to a premature stop codon in the mRNA, leading to nonsense-mediated mRNA decay.</text>
</comment>
<comment type="miscellaneous">
    <molecule>Isoform 4</molecule>
    <text evidence="15">May be produced at very low levels due to a premature stop codon in the mRNA, leading to nonsense-mediated mRNA decay.</text>
</comment>
<comment type="miscellaneous">
    <molecule>Isoform 5</molecule>
    <text evidence="15">May be produced at very low levels due to a premature stop codon in the mRNA, leading to nonsense-mediated mRNA decay.</text>
</comment>
<comment type="similarity">
    <text evidence="15">Belongs to the cyclic nucleotide phosphodiesterase family. PDE8 subfamily.</text>
</comment>
<comment type="sequence caution" evidence="15">
    <conflict type="erroneous translation">
        <sequence resource="EMBL-CDS" id="AAL18612"/>
    </conflict>
    <text>Wrong choice of CDS.</text>
</comment>
<comment type="sequence caution" evidence="15">
    <conflict type="erroneous translation">
        <sequence resource="EMBL-CDS" id="AAL18613"/>
    </conflict>
    <text>Wrong choice of CDS.</text>
</comment>
<comment type="sequence caution" evidence="15">
    <conflict type="erroneous translation">
        <sequence resource="EMBL-CDS" id="AAL18614"/>
    </conflict>
    <text>Wrong choice of CDS.</text>
</comment>
<comment type="sequence caution" evidence="15">
    <conflict type="miscellaneous discrepancy">
        <sequence resource="EMBL-CDS" id="BAG54458"/>
    </conflict>
    <text>Intron retention.</text>
</comment>
<comment type="sequence caution" evidence="15">
    <conflict type="erroneous gene model prediction">
        <sequence resource="EMBL-CDS" id="EAX01967"/>
    </conflict>
</comment>
<gene>
    <name type="primary">PDE8A</name>
</gene>
<protein>
    <recommendedName>
        <fullName>High affinity cAMP-specific and IBMX-insensitive 3',5'-cyclic phosphodiesterase 8A</fullName>
        <ecNumber evidence="3">3.1.4.53</ecNumber>
    </recommendedName>
</protein>